<dbReference type="EC" id="2.2.1.9" evidence="1"/>
<dbReference type="EMBL" id="CP000931">
    <property type="protein sequence ID" value="ABZ74873.1"/>
    <property type="molecule type" value="Genomic_DNA"/>
</dbReference>
<dbReference type="RefSeq" id="WP_012275428.1">
    <property type="nucleotide sequence ID" value="NC_010334.1"/>
</dbReference>
<dbReference type="SMR" id="B0TNX0"/>
<dbReference type="STRING" id="458817.Shal_0297"/>
<dbReference type="KEGG" id="shl:Shal_0297"/>
<dbReference type="eggNOG" id="COG1165">
    <property type="taxonomic scope" value="Bacteria"/>
</dbReference>
<dbReference type="HOGENOM" id="CLU_006051_3_0_6"/>
<dbReference type="OrthoDB" id="9791859at2"/>
<dbReference type="UniPathway" id="UPA00079"/>
<dbReference type="UniPathway" id="UPA01057">
    <property type="reaction ID" value="UER00164"/>
</dbReference>
<dbReference type="Proteomes" id="UP000001317">
    <property type="component" value="Chromosome"/>
</dbReference>
<dbReference type="GO" id="GO:0070204">
    <property type="term" value="F:2-succinyl-5-enolpyruvyl-6-hydroxy-3-cyclohexene-1-carboxylic-acid synthase activity"/>
    <property type="evidence" value="ECO:0007669"/>
    <property type="project" value="UniProtKB-UniRule"/>
</dbReference>
<dbReference type="GO" id="GO:0000287">
    <property type="term" value="F:magnesium ion binding"/>
    <property type="evidence" value="ECO:0007669"/>
    <property type="project" value="UniProtKB-UniRule"/>
</dbReference>
<dbReference type="GO" id="GO:0030145">
    <property type="term" value="F:manganese ion binding"/>
    <property type="evidence" value="ECO:0007669"/>
    <property type="project" value="UniProtKB-UniRule"/>
</dbReference>
<dbReference type="GO" id="GO:0030976">
    <property type="term" value="F:thiamine pyrophosphate binding"/>
    <property type="evidence" value="ECO:0007669"/>
    <property type="project" value="UniProtKB-UniRule"/>
</dbReference>
<dbReference type="GO" id="GO:0009234">
    <property type="term" value="P:menaquinone biosynthetic process"/>
    <property type="evidence" value="ECO:0007669"/>
    <property type="project" value="UniProtKB-UniRule"/>
</dbReference>
<dbReference type="CDD" id="cd07037">
    <property type="entry name" value="TPP_PYR_MenD"/>
    <property type="match status" value="1"/>
</dbReference>
<dbReference type="CDD" id="cd02009">
    <property type="entry name" value="TPP_SHCHC_synthase"/>
    <property type="match status" value="1"/>
</dbReference>
<dbReference type="Gene3D" id="3.40.50.970">
    <property type="match status" value="2"/>
</dbReference>
<dbReference type="Gene3D" id="3.40.50.1220">
    <property type="entry name" value="TPP-binding domain"/>
    <property type="match status" value="1"/>
</dbReference>
<dbReference type="HAMAP" id="MF_01659">
    <property type="entry name" value="MenD"/>
    <property type="match status" value="1"/>
</dbReference>
<dbReference type="InterPro" id="IPR004433">
    <property type="entry name" value="MenaQ_synth_MenD"/>
</dbReference>
<dbReference type="InterPro" id="IPR032264">
    <property type="entry name" value="MenD_middle"/>
</dbReference>
<dbReference type="InterPro" id="IPR029061">
    <property type="entry name" value="THDP-binding"/>
</dbReference>
<dbReference type="InterPro" id="IPR012001">
    <property type="entry name" value="Thiamin_PyroP_enz_TPP-bd_dom"/>
</dbReference>
<dbReference type="InterPro" id="IPR011766">
    <property type="entry name" value="TPP_enzyme_TPP-bd"/>
</dbReference>
<dbReference type="NCBIfam" id="TIGR00173">
    <property type="entry name" value="menD"/>
    <property type="match status" value="1"/>
</dbReference>
<dbReference type="PANTHER" id="PTHR42916">
    <property type="entry name" value="2-SUCCINYL-5-ENOLPYRUVYL-6-HYDROXY-3-CYCLOHEXENE-1-CARBOXYLATE SYNTHASE"/>
    <property type="match status" value="1"/>
</dbReference>
<dbReference type="PANTHER" id="PTHR42916:SF1">
    <property type="entry name" value="PROTEIN PHYLLO, CHLOROPLASTIC"/>
    <property type="match status" value="1"/>
</dbReference>
<dbReference type="Pfam" id="PF02775">
    <property type="entry name" value="TPP_enzyme_C"/>
    <property type="match status" value="1"/>
</dbReference>
<dbReference type="Pfam" id="PF16582">
    <property type="entry name" value="TPP_enzyme_M_2"/>
    <property type="match status" value="1"/>
</dbReference>
<dbReference type="Pfam" id="PF02776">
    <property type="entry name" value="TPP_enzyme_N"/>
    <property type="match status" value="1"/>
</dbReference>
<dbReference type="PIRSF" id="PIRSF004983">
    <property type="entry name" value="MenD"/>
    <property type="match status" value="1"/>
</dbReference>
<dbReference type="SUPFAM" id="SSF52518">
    <property type="entry name" value="Thiamin diphosphate-binding fold (THDP-binding)"/>
    <property type="match status" value="2"/>
</dbReference>
<gene>
    <name evidence="1" type="primary">menD</name>
    <name type="ordered locus">Shal_0297</name>
</gene>
<protein>
    <recommendedName>
        <fullName evidence="1">2-succinyl-5-enolpyruvyl-6-hydroxy-3-cyclohexene-1-carboxylate synthase</fullName>
        <shortName evidence="1">SEPHCHC synthase</shortName>
        <ecNumber evidence="1">2.2.1.9</ecNumber>
    </recommendedName>
    <alternativeName>
        <fullName evidence="1">Menaquinone biosynthesis protein MenD</fullName>
    </alternativeName>
</protein>
<feature type="chain" id="PRO_0000341832" description="2-succinyl-5-enolpyruvyl-6-hydroxy-3-cyclohexene-1-carboxylate synthase">
    <location>
        <begin position="1"/>
        <end position="569"/>
    </location>
</feature>
<comment type="function">
    <text evidence="1">Catalyzes the thiamine diphosphate-dependent decarboxylation of 2-oxoglutarate and the subsequent addition of the resulting succinic semialdehyde-thiamine pyrophosphate anion to isochorismate to yield 2-succinyl-5-enolpyruvyl-6-hydroxy-3-cyclohexene-1-carboxylate (SEPHCHC).</text>
</comment>
<comment type="catalytic activity">
    <reaction evidence="1">
        <text>isochorismate + 2-oxoglutarate + H(+) = 5-enolpyruvoyl-6-hydroxy-2-succinyl-cyclohex-3-ene-1-carboxylate + CO2</text>
        <dbReference type="Rhea" id="RHEA:25593"/>
        <dbReference type="ChEBI" id="CHEBI:15378"/>
        <dbReference type="ChEBI" id="CHEBI:16526"/>
        <dbReference type="ChEBI" id="CHEBI:16810"/>
        <dbReference type="ChEBI" id="CHEBI:29780"/>
        <dbReference type="ChEBI" id="CHEBI:58818"/>
        <dbReference type="EC" id="2.2.1.9"/>
    </reaction>
</comment>
<comment type="cofactor">
    <cofactor evidence="1">
        <name>Mg(2+)</name>
        <dbReference type="ChEBI" id="CHEBI:18420"/>
    </cofactor>
    <cofactor evidence="1">
        <name>Mn(2+)</name>
        <dbReference type="ChEBI" id="CHEBI:29035"/>
    </cofactor>
</comment>
<comment type="cofactor">
    <cofactor evidence="1">
        <name>thiamine diphosphate</name>
        <dbReference type="ChEBI" id="CHEBI:58937"/>
    </cofactor>
    <text evidence="1">Binds 1 thiamine pyrophosphate per subunit.</text>
</comment>
<comment type="pathway">
    <text evidence="1">Quinol/quinone metabolism; 1,4-dihydroxy-2-naphthoate biosynthesis; 1,4-dihydroxy-2-naphthoate from chorismate: step 2/7.</text>
</comment>
<comment type="pathway">
    <text evidence="1">Quinol/quinone metabolism; menaquinone biosynthesis.</text>
</comment>
<comment type="subunit">
    <text evidence="1">Homodimer.</text>
</comment>
<comment type="similarity">
    <text evidence="1">Belongs to the TPP enzyme family. MenD subfamily.</text>
</comment>
<keyword id="KW-0460">Magnesium</keyword>
<keyword id="KW-0464">Manganese</keyword>
<keyword id="KW-0474">Menaquinone biosynthesis</keyword>
<keyword id="KW-0479">Metal-binding</keyword>
<keyword id="KW-0786">Thiamine pyrophosphate</keyword>
<keyword id="KW-0808">Transferase</keyword>
<accession>B0TNX0</accession>
<proteinExistence type="inferred from homology"/>
<organism>
    <name type="scientific">Shewanella halifaxensis (strain HAW-EB4)</name>
    <dbReference type="NCBI Taxonomy" id="458817"/>
    <lineage>
        <taxon>Bacteria</taxon>
        <taxon>Pseudomonadati</taxon>
        <taxon>Pseudomonadota</taxon>
        <taxon>Gammaproteobacteria</taxon>
        <taxon>Alteromonadales</taxon>
        <taxon>Shewanellaceae</taxon>
        <taxon>Shewanella</taxon>
    </lineage>
</organism>
<sequence length="569" mass="62284">MQTEHTAELNLLWGTLILEELARLGVKHVCMAPGSRSTPLTLAAAKQSKLSQHIHFDERGLGFMALGLAKASQAPVAIITTSGTAVANLYPAIIEAWLTHVPLIVLSGDRPPELIDCGANQAIIQPAIFAQYAKQLNLPTPDLNIAPQALLSLLDDAVCNQSQPVHINCMYREPLYPNEPSVDFSRYLAPIAKWQQQTKPYSQFATMNSGQMPTSDALARFVHGKGVIVAATLAPEQQSEELIVLAQKLGWPIVTDAQSQLRQHGGAIGNIDQLLQQPKSKALLAQAEKVLVFGGRILSKRLISYLNDQDWKDYWQVLPQQQRLDPSNKPKQVWIAPAHQFAALAWPRSSQANWALNLVQFNDELETLYQQQIDHAEFGEAQAIRAIAKRQTNEQQLFIGNSLPIRLYDMFAPITTSSANVFTNRGASGIDGLLATACGVAIAGAKPTTLIIGDISALHDLNSLAIARTVTSPFVIVILNNDGGNIFNLLPVPNEQLRSDYYRLSHGLEFGFGAAMFGLAYNQVDSLSDFIESYEYAMTYSGPSVIEVTVAQNQASEQIAQISSWVKQS</sequence>
<evidence type="ECO:0000255" key="1">
    <source>
        <dbReference type="HAMAP-Rule" id="MF_01659"/>
    </source>
</evidence>
<name>MEND_SHEHH</name>
<reference key="1">
    <citation type="submission" date="2008-01" db="EMBL/GenBank/DDBJ databases">
        <title>Complete sequence of Shewanella halifaxensis HAW-EB4.</title>
        <authorList>
            <consortium name="US DOE Joint Genome Institute"/>
            <person name="Copeland A."/>
            <person name="Lucas S."/>
            <person name="Lapidus A."/>
            <person name="Glavina del Rio T."/>
            <person name="Dalin E."/>
            <person name="Tice H."/>
            <person name="Bruce D."/>
            <person name="Goodwin L."/>
            <person name="Pitluck S."/>
            <person name="Sims D."/>
            <person name="Brettin T."/>
            <person name="Detter J.C."/>
            <person name="Han C."/>
            <person name="Kuske C.R."/>
            <person name="Schmutz J."/>
            <person name="Larimer F."/>
            <person name="Land M."/>
            <person name="Hauser L."/>
            <person name="Kyrpides N."/>
            <person name="Kim E."/>
            <person name="Zhao J.-S."/>
            <person name="Richardson P."/>
        </authorList>
    </citation>
    <scope>NUCLEOTIDE SEQUENCE [LARGE SCALE GENOMIC DNA]</scope>
    <source>
        <strain>HAW-EB4</strain>
    </source>
</reference>